<dbReference type="EMBL" id="AY147592">
    <property type="protein sequence ID" value="AAN32469.1"/>
    <property type="molecule type" value="Genomic_DNA"/>
</dbReference>
<dbReference type="SMR" id="Q67H85"/>
<dbReference type="GO" id="GO:0009535">
    <property type="term" value="C:chloroplast thylakoid membrane"/>
    <property type="evidence" value="ECO:0007669"/>
    <property type="project" value="UniProtKB-SubCell"/>
</dbReference>
<dbReference type="GO" id="GO:0009539">
    <property type="term" value="C:photosystem II reaction center"/>
    <property type="evidence" value="ECO:0007669"/>
    <property type="project" value="InterPro"/>
</dbReference>
<dbReference type="GO" id="GO:0009055">
    <property type="term" value="F:electron transfer activity"/>
    <property type="evidence" value="ECO:0007669"/>
    <property type="project" value="UniProtKB-UniRule"/>
</dbReference>
<dbReference type="GO" id="GO:0020037">
    <property type="term" value="F:heme binding"/>
    <property type="evidence" value="ECO:0007669"/>
    <property type="project" value="InterPro"/>
</dbReference>
<dbReference type="GO" id="GO:0005506">
    <property type="term" value="F:iron ion binding"/>
    <property type="evidence" value="ECO:0007669"/>
    <property type="project" value="UniProtKB-UniRule"/>
</dbReference>
<dbReference type="GO" id="GO:0009767">
    <property type="term" value="P:photosynthetic electron transport chain"/>
    <property type="evidence" value="ECO:0007669"/>
    <property type="project" value="InterPro"/>
</dbReference>
<dbReference type="HAMAP" id="MF_00643">
    <property type="entry name" value="PSII_PsbF"/>
    <property type="match status" value="1"/>
</dbReference>
<dbReference type="InterPro" id="IPR006241">
    <property type="entry name" value="PSII_cyt_b559_bsu"/>
</dbReference>
<dbReference type="InterPro" id="IPR006216">
    <property type="entry name" value="PSII_cyt_b559_CS"/>
</dbReference>
<dbReference type="InterPro" id="IPR013081">
    <property type="entry name" value="PSII_cyt_b559_N"/>
</dbReference>
<dbReference type="NCBIfam" id="TIGR01333">
    <property type="entry name" value="cyt_b559_beta"/>
    <property type="match status" value="1"/>
</dbReference>
<dbReference type="Pfam" id="PF00283">
    <property type="entry name" value="Cytochrom_B559"/>
    <property type="match status" value="1"/>
</dbReference>
<dbReference type="PIRSF" id="PIRSF000037">
    <property type="entry name" value="PsbF"/>
    <property type="match status" value="1"/>
</dbReference>
<dbReference type="SUPFAM" id="SSF161045">
    <property type="entry name" value="Cytochrome b559 subunits"/>
    <property type="match status" value="1"/>
</dbReference>
<dbReference type="PROSITE" id="PS00537">
    <property type="entry name" value="CYTOCHROME_B559"/>
    <property type="match status" value="1"/>
</dbReference>
<gene>
    <name evidence="1" type="primary">psbF</name>
</gene>
<name>PSBF_YUCGL</name>
<comment type="function">
    <text evidence="1">This b-type cytochrome is tightly associated with the reaction center of photosystem II (PSII). PSII is a light-driven water:plastoquinone oxidoreductase that uses light energy to abstract electrons from H(2)O, generating O(2) and a proton gradient subsequently used for ATP formation. It consists of a core antenna complex that captures photons, and an electron transfer chain that converts photonic excitation into a charge separation.</text>
</comment>
<comment type="cofactor">
    <cofactor evidence="1">
        <name>heme b</name>
        <dbReference type="ChEBI" id="CHEBI:60344"/>
    </cofactor>
    <text evidence="1">With its partner (PsbE) binds heme. PSII binds additional chlorophylls, carotenoids and specific lipids.</text>
</comment>
<comment type="subunit">
    <text evidence="1">Heterodimer of an alpha subunit and a beta subunit. PSII is composed of 1 copy each of membrane proteins PsbA, PsbB, PsbC, PsbD, PsbE, PsbF, PsbH, PsbI, PsbJ, PsbK, PsbL, PsbM, PsbT, PsbX, PsbY, PsbZ, Psb30/Ycf12, at least 3 peripheral proteins of the oxygen-evolving complex and a large number of cofactors. It forms dimeric complexes.</text>
</comment>
<comment type="subcellular location">
    <subcellularLocation>
        <location evidence="1">Plastid</location>
        <location evidence="1">Chloroplast thylakoid membrane</location>
        <topology evidence="1">Single-pass membrane protein</topology>
    </subcellularLocation>
</comment>
<comment type="similarity">
    <text evidence="1">Belongs to the PsbE/PsbF family.</text>
</comment>
<geneLocation type="chloroplast"/>
<evidence type="ECO:0000255" key="1">
    <source>
        <dbReference type="HAMAP-Rule" id="MF_00643"/>
    </source>
</evidence>
<organism>
    <name type="scientific">Yucca glauca</name>
    <name type="common">Soapweed yucca</name>
    <name type="synonym">Yucca angustifolia</name>
    <dbReference type="NCBI Taxonomy" id="207936"/>
    <lineage>
        <taxon>Eukaryota</taxon>
        <taxon>Viridiplantae</taxon>
        <taxon>Streptophyta</taxon>
        <taxon>Embryophyta</taxon>
        <taxon>Tracheophyta</taxon>
        <taxon>Spermatophyta</taxon>
        <taxon>Magnoliopsida</taxon>
        <taxon>Liliopsida</taxon>
        <taxon>Asparagales</taxon>
        <taxon>Asparagaceae</taxon>
        <taxon>Agavoideae</taxon>
        <taxon>Yucca</taxon>
    </lineage>
</organism>
<reference key="1">
    <citation type="submission" date="2002-09" db="EMBL/GenBank/DDBJ databases">
        <title>Phylogenetic relationships among the major lineages of Asparagales based on a large chloroplast data set.</title>
        <authorList>
            <person name="McPherson M.A."/>
            <person name="Rai H.S."/>
            <person name="Wong W.A."/>
            <person name="Graham S.W."/>
        </authorList>
    </citation>
    <scope>NUCLEOTIDE SEQUENCE [GENOMIC DNA]</scope>
</reference>
<protein>
    <recommendedName>
        <fullName evidence="1">Cytochrome b559 subunit beta</fullName>
    </recommendedName>
    <alternativeName>
        <fullName evidence="1">PSII reaction center subunit VI</fullName>
    </alternativeName>
</protein>
<keyword id="KW-0150">Chloroplast</keyword>
<keyword id="KW-0249">Electron transport</keyword>
<keyword id="KW-0349">Heme</keyword>
<keyword id="KW-0408">Iron</keyword>
<keyword id="KW-0472">Membrane</keyword>
<keyword id="KW-0479">Metal-binding</keyword>
<keyword id="KW-0602">Photosynthesis</keyword>
<keyword id="KW-0604">Photosystem II</keyword>
<keyword id="KW-0934">Plastid</keyword>
<keyword id="KW-0793">Thylakoid</keyword>
<keyword id="KW-0812">Transmembrane</keyword>
<keyword id="KW-1133">Transmembrane helix</keyword>
<keyword id="KW-0813">Transport</keyword>
<feature type="chain" id="PRO_0000200465" description="Cytochrome b559 subunit beta">
    <location>
        <begin position="1"/>
        <end position="39"/>
    </location>
</feature>
<feature type="transmembrane region" description="Helical" evidence="1">
    <location>
        <begin position="14"/>
        <end position="30"/>
    </location>
</feature>
<feature type="binding site" description="axial binding residue" evidence="1">
    <location>
        <position position="18"/>
    </location>
    <ligand>
        <name>heme</name>
        <dbReference type="ChEBI" id="CHEBI:30413"/>
        <note>ligand shared with alpha subunit</note>
    </ligand>
    <ligandPart>
        <name>Fe</name>
        <dbReference type="ChEBI" id="CHEBI:18248"/>
    </ligandPart>
</feature>
<accession>Q67H85</accession>
<proteinExistence type="inferred from homology"/>
<sequence length="39" mass="4424">MTIDRTYPIFTVRWLAVHGLAVPTVSFLGSISAMQFIQR</sequence>